<protein>
    <recommendedName>
        <fullName>Cytochrome bo(3) ubiquinol oxidase subunit 4</fullName>
    </recommendedName>
    <alternativeName>
        <fullName>Cytochrome o ubiquinol oxidase subunit 4</fullName>
        <shortName>Cytochrome o subunit 4</shortName>
    </alternativeName>
    <alternativeName>
        <fullName>Oxidase bo(3) subunit 4</fullName>
    </alternativeName>
    <alternativeName>
        <fullName>Ubiquinol oxidase chain D</fullName>
    </alternativeName>
    <alternativeName>
        <fullName>Ubiquinol oxidase polypeptide IV</fullName>
    </alternativeName>
    <alternativeName>
        <fullName>Ubiquinol oxidase subunit 4</fullName>
    </alternativeName>
</protein>
<evidence type="ECO:0000250" key="1"/>
<evidence type="ECO:0000305" key="2"/>
<accession>P0ABJ7</accession>
<accession>P18403</accession>
<accession>P77116</accession>
<gene>
    <name type="primary">cyoD</name>
    <name type="ordered locus">Z0532</name>
    <name type="ordered locus">ECs0483</name>
</gene>
<organism>
    <name type="scientific">Escherichia coli O157:H7</name>
    <dbReference type="NCBI Taxonomy" id="83334"/>
    <lineage>
        <taxon>Bacteria</taxon>
        <taxon>Pseudomonadati</taxon>
        <taxon>Pseudomonadota</taxon>
        <taxon>Gammaproteobacteria</taxon>
        <taxon>Enterobacterales</taxon>
        <taxon>Enterobacteriaceae</taxon>
        <taxon>Escherichia</taxon>
    </lineage>
</organism>
<comment type="function">
    <text evidence="1">Cytochrome bo(3) ubiquinol terminal oxidase is the component of the aerobic respiratory chain of E.coli that predominates when cells are grown at high aeration. Has proton pump activity across the membrane in addition to electron transfer, pumping 2 protons/electron (By similarity).</text>
</comment>
<comment type="subunit">
    <text evidence="1">Heterooctamer of two A chains, two B chains, two C chains and two D chains.</text>
</comment>
<comment type="subcellular location">
    <subcellularLocation>
        <location evidence="1">Cell inner membrane</location>
        <topology evidence="1">Multi-pass membrane protein</topology>
    </subcellularLocation>
</comment>
<comment type="similarity">
    <text evidence="2">Belongs to the cytochrome c oxidase bacterial subunit 4 family.</text>
</comment>
<name>CYOD_ECO57</name>
<feature type="chain" id="PRO_0000183911" description="Cytochrome bo(3) ubiquinol oxidase subunit 4">
    <location>
        <begin position="1"/>
        <end position="109"/>
    </location>
</feature>
<feature type="topological domain" description="Cytoplasmic" evidence="2">
    <location>
        <begin position="1"/>
        <end position="17"/>
    </location>
</feature>
<feature type="transmembrane region" description="Helical" evidence="2">
    <location>
        <begin position="18"/>
        <end position="36"/>
    </location>
</feature>
<feature type="topological domain" description="Periplasmic" evidence="2">
    <location>
        <begin position="37"/>
        <end position="45"/>
    </location>
</feature>
<feature type="transmembrane region" description="Helical" evidence="2">
    <location>
        <begin position="46"/>
        <end position="64"/>
    </location>
</feature>
<feature type="topological domain" description="Cytoplasmic" evidence="2">
    <location>
        <begin position="65"/>
        <end position="80"/>
    </location>
</feature>
<feature type="transmembrane region" description="Helical" evidence="2">
    <location>
        <begin position="81"/>
        <end position="99"/>
    </location>
</feature>
<feature type="topological domain" description="Periplasmic" evidence="2">
    <location>
        <begin position="100"/>
        <end position="109"/>
    </location>
</feature>
<proteinExistence type="inferred from homology"/>
<sequence length="109" mass="12029">MSHSTDHSGASHGSVKTYMTGFILSIILTVIPFWMVMTGAASPAVILGTILAMAVVQVLVHLVCFLHMNTKSDEGWNMTAFVFTVLIIAILVVGSIWIMWNLNYNMMMH</sequence>
<reference key="1">
    <citation type="journal article" date="2001" name="Nature">
        <title>Genome sequence of enterohaemorrhagic Escherichia coli O157:H7.</title>
        <authorList>
            <person name="Perna N.T."/>
            <person name="Plunkett G. III"/>
            <person name="Burland V."/>
            <person name="Mau B."/>
            <person name="Glasner J.D."/>
            <person name="Rose D.J."/>
            <person name="Mayhew G.F."/>
            <person name="Evans P.S."/>
            <person name="Gregor J."/>
            <person name="Kirkpatrick H.A."/>
            <person name="Posfai G."/>
            <person name="Hackett J."/>
            <person name="Klink S."/>
            <person name="Boutin A."/>
            <person name="Shao Y."/>
            <person name="Miller L."/>
            <person name="Grotbeck E.J."/>
            <person name="Davis N.W."/>
            <person name="Lim A."/>
            <person name="Dimalanta E.T."/>
            <person name="Potamousis K."/>
            <person name="Apodaca J."/>
            <person name="Anantharaman T.S."/>
            <person name="Lin J."/>
            <person name="Yen G."/>
            <person name="Schwartz D.C."/>
            <person name="Welch R.A."/>
            <person name="Blattner F.R."/>
        </authorList>
    </citation>
    <scope>NUCLEOTIDE SEQUENCE [LARGE SCALE GENOMIC DNA]</scope>
    <source>
        <strain>O157:H7 / EDL933 / ATCC 700927 / EHEC</strain>
    </source>
</reference>
<reference key="2">
    <citation type="journal article" date="2001" name="DNA Res.">
        <title>Complete genome sequence of enterohemorrhagic Escherichia coli O157:H7 and genomic comparison with a laboratory strain K-12.</title>
        <authorList>
            <person name="Hayashi T."/>
            <person name="Makino K."/>
            <person name="Ohnishi M."/>
            <person name="Kurokawa K."/>
            <person name="Ishii K."/>
            <person name="Yokoyama K."/>
            <person name="Han C.-G."/>
            <person name="Ohtsubo E."/>
            <person name="Nakayama K."/>
            <person name="Murata T."/>
            <person name="Tanaka M."/>
            <person name="Tobe T."/>
            <person name="Iida T."/>
            <person name="Takami H."/>
            <person name="Honda T."/>
            <person name="Sasakawa C."/>
            <person name="Ogasawara N."/>
            <person name="Yasunaga T."/>
            <person name="Kuhara S."/>
            <person name="Shiba T."/>
            <person name="Hattori M."/>
            <person name="Shinagawa H."/>
        </authorList>
    </citation>
    <scope>NUCLEOTIDE SEQUENCE [LARGE SCALE GENOMIC DNA]</scope>
    <source>
        <strain>O157:H7 / Sakai / RIMD 0509952 / EHEC</strain>
    </source>
</reference>
<keyword id="KW-0997">Cell inner membrane</keyword>
<keyword id="KW-1003">Cell membrane</keyword>
<keyword id="KW-0249">Electron transport</keyword>
<keyword id="KW-0472">Membrane</keyword>
<keyword id="KW-0560">Oxidoreductase</keyword>
<keyword id="KW-1185">Reference proteome</keyword>
<keyword id="KW-0812">Transmembrane</keyword>
<keyword id="KW-1133">Transmembrane helix</keyword>
<keyword id="KW-0813">Transport</keyword>
<dbReference type="EMBL" id="AE005174">
    <property type="protein sequence ID" value="AAG54779.1"/>
    <property type="molecule type" value="Genomic_DNA"/>
</dbReference>
<dbReference type="EMBL" id="BA000007">
    <property type="protein sequence ID" value="BAB33906.1"/>
    <property type="molecule type" value="Genomic_DNA"/>
</dbReference>
<dbReference type="PIR" id="C90689">
    <property type="entry name" value="C90689"/>
</dbReference>
<dbReference type="PIR" id="G85539">
    <property type="entry name" value="G85539"/>
</dbReference>
<dbReference type="RefSeq" id="NP_308510.1">
    <property type="nucleotide sequence ID" value="NC_002695.1"/>
</dbReference>
<dbReference type="RefSeq" id="WP_000019869.1">
    <property type="nucleotide sequence ID" value="NZ_VOAI01000005.1"/>
</dbReference>
<dbReference type="SMR" id="P0ABJ7"/>
<dbReference type="STRING" id="155864.Z0532"/>
<dbReference type="GeneID" id="914585"/>
<dbReference type="KEGG" id="ece:Z0532"/>
<dbReference type="KEGG" id="ecs:ECs_0483"/>
<dbReference type="PATRIC" id="fig|386585.9.peg.584"/>
<dbReference type="eggNOG" id="COG3125">
    <property type="taxonomic scope" value="Bacteria"/>
</dbReference>
<dbReference type="HOGENOM" id="CLU_140945_1_0_6"/>
<dbReference type="OMA" id="IVVHMVF"/>
<dbReference type="Proteomes" id="UP000000558">
    <property type="component" value="Chromosome"/>
</dbReference>
<dbReference type="Proteomes" id="UP000002519">
    <property type="component" value="Chromosome"/>
</dbReference>
<dbReference type="GO" id="GO:0009319">
    <property type="term" value="C:cytochrome o ubiquinol oxidase complex"/>
    <property type="evidence" value="ECO:0007669"/>
    <property type="project" value="TreeGrafter"/>
</dbReference>
<dbReference type="GO" id="GO:0005886">
    <property type="term" value="C:plasma membrane"/>
    <property type="evidence" value="ECO:0007669"/>
    <property type="project" value="UniProtKB-SubCell"/>
</dbReference>
<dbReference type="GO" id="GO:0009486">
    <property type="term" value="F:cytochrome bo3 ubiquinol oxidase activity"/>
    <property type="evidence" value="ECO:0007669"/>
    <property type="project" value="InterPro"/>
</dbReference>
<dbReference type="GO" id="GO:0015078">
    <property type="term" value="F:proton transmembrane transporter activity"/>
    <property type="evidence" value="ECO:0007669"/>
    <property type="project" value="TreeGrafter"/>
</dbReference>
<dbReference type="GO" id="GO:0019646">
    <property type="term" value="P:aerobic electron transport chain"/>
    <property type="evidence" value="ECO:0007669"/>
    <property type="project" value="TreeGrafter"/>
</dbReference>
<dbReference type="GO" id="GO:0015990">
    <property type="term" value="P:electron transport coupled proton transport"/>
    <property type="evidence" value="ECO:0007669"/>
    <property type="project" value="InterPro"/>
</dbReference>
<dbReference type="InterPro" id="IPR005171">
    <property type="entry name" value="Cyt_c_oxidase_su4_prok"/>
</dbReference>
<dbReference type="InterPro" id="IPR014210">
    <property type="entry name" value="Cyt_o_ubiqinol_oxidase_su4"/>
</dbReference>
<dbReference type="InterPro" id="IPR050968">
    <property type="entry name" value="Cytochrome_c_oxidase_bac_sub4"/>
</dbReference>
<dbReference type="NCBIfam" id="TIGR02847">
    <property type="entry name" value="CyoD"/>
    <property type="match status" value="1"/>
</dbReference>
<dbReference type="NCBIfam" id="NF007878">
    <property type="entry name" value="PRK10582.1"/>
    <property type="match status" value="1"/>
</dbReference>
<dbReference type="PANTHER" id="PTHR36835">
    <property type="entry name" value="CYTOCHROME BO(3) UBIQUINOL OXIDASE SUBUNIT 4"/>
    <property type="match status" value="1"/>
</dbReference>
<dbReference type="PANTHER" id="PTHR36835:SF1">
    <property type="entry name" value="CYTOCHROME BO(3) UBIQUINOL OXIDASE SUBUNIT 4"/>
    <property type="match status" value="1"/>
</dbReference>
<dbReference type="Pfam" id="PF03626">
    <property type="entry name" value="COX4_pro"/>
    <property type="match status" value="1"/>
</dbReference>